<reference key="1">
    <citation type="journal article" date="2006" name="Proc. Natl. Acad. Sci. U.S.A.">
        <title>Molecular genetic anatomy of inter- and intraserotype variation in the human bacterial pathogen group A Streptococcus.</title>
        <authorList>
            <person name="Beres S.B."/>
            <person name="Richter E.W."/>
            <person name="Nagiec M.J."/>
            <person name="Sumby P."/>
            <person name="Porcella S.F."/>
            <person name="DeLeo F.R."/>
            <person name="Musser J.M."/>
        </authorList>
    </citation>
    <scope>NUCLEOTIDE SEQUENCE [LARGE SCALE GENOMIC DNA]</scope>
    <source>
        <strain>MGAS10270</strain>
    </source>
</reference>
<evidence type="ECO:0000255" key="1">
    <source>
        <dbReference type="HAMAP-Rule" id="MF_00071"/>
    </source>
</evidence>
<feature type="chain" id="PRO_0000265712" description="Elongation factor 4">
    <location>
        <begin position="1"/>
        <end position="610"/>
    </location>
</feature>
<feature type="domain" description="tr-type G">
    <location>
        <begin position="11"/>
        <end position="193"/>
    </location>
</feature>
<feature type="binding site" evidence="1">
    <location>
        <begin position="23"/>
        <end position="28"/>
    </location>
    <ligand>
        <name>GTP</name>
        <dbReference type="ChEBI" id="CHEBI:37565"/>
    </ligand>
</feature>
<feature type="binding site" evidence="1">
    <location>
        <begin position="140"/>
        <end position="143"/>
    </location>
    <ligand>
        <name>GTP</name>
        <dbReference type="ChEBI" id="CHEBI:37565"/>
    </ligand>
</feature>
<dbReference type="EC" id="3.6.5.n1" evidence="1"/>
<dbReference type="EMBL" id="CP000260">
    <property type="protein sequence ID" value="ABF33957.1"/>
    <property type="molecule type" value="Genomic_DNA"/>
</dbReference>
<dbReference type="SMR" id="Q1JH37"/>
<dbReference type="KEGG" id="sph:MGAS10270_Spy0892"/>
<dbReference type="HOGENOM" id="CLU_009995_3_3_9"/>
<dbReference type="Proteomes" id="UP000002436">
    <property type="component" value="Chromosome"/>
</dbReference>
<dbReference type="GO" id="GO:0005886">
    <property type="term" value="C:plasma membrane"/>
    <property type="evidence" value="ECO:0007669"/>
    <property type="project" value="UniProtKB-SubCell"/>
</dbReference>
<dbReference type="GO" id="GO:0005525">
    <property type="term" value="F:GTP binding"/>
    <property type="evidence" value="ECO:0007669"/>
    <property type="project" value="UniProtKB-UniRule"/>
</dbReference>
<dbReference type="GO" id="GO:0003924">
    <property type="term" value="F:GTPase activity"/>
    <property type="evidence" value="ECO:0007669"/>
    <property type="project" value="UniProtKB-UniRule"/>
</dbReference>
<dbReference type="GO" id="GO:0043022">
    <property type="term" value="F:ribosome binding"/>
    <property type="evidence" value="ECO:0007669"/>
    <property type="project" value="UniProtKB-UniRule"/>
</dbReference>
<dbReference type="GO" id="GO:0003746">
    <property type="term" value="F:translation elongation factor activity"/>
    <property type="evidence" value="ECO:0007669"/>
    <property type="project" value="UniProtKB-UniRule"/>
</dbReference>
<dbReference type="GO" id="GO:0045727">
    <property type="term" value="P:positive regulation of translation"/>
    <property type="evidence" value="ECO:0007669"/>
    <property type="project" value="UniProtKB-UniRule"/>
</dbReference>
<dbReference type="CDD" id="cd03699">
    <property type="entry name" value="EF4_II"/>
    <property type="match status" value="1"/>
</dbReference>
<dbReference type="CDD" id="cd16260">
    <property type="entry name" value="EF4_III"/>
    <property type="match status" value="1"/>
</dbReference>
<dbReference type="CDD" id="cd01890">
    <property type="entry name" value="LepA"/>
    <property type="match status" value="1"/>
</dbReference>
<dbReference type="CDD" id="cd03709">
    <property type="entry name" value="lepA_C"/>
    <property type="match status" value="1"/>
</dbReference>
<dbReference type="FunFam" id="3.40.50.300:FF:000078">
    <property type="entry name" value="Elongation factor 4"/>
    <property type="match status" value="1"/>
</dbReference>
<dbReference type="FunFam" id="2.40.30.10:FF:000015">
    <property type="entry name" value="Translation factor GUF1, mitochondrial"/>
    <property type="match status" value="1"/>
</dbReference>
<dbReference type="FunFam" id="3.30.70.240:FF:000007">
    <property type="entry name" value="Translation factor GUF1, mitochondrial"/>
    <property type="match status" value="1"/>
</dbReference>
<dbReference type="FunFam" id="3.30.70.2570:FF:000001">
    <property type="entry name" value="Translation factor GUF1, mitochondrial"/>
    <property type="match status" value="1"/>
</dbReference>
<dbReference type="FunFam" id="3.30.70.870:FF:000004">
    <property type="entry name" value="Translation factor GUF1, mitochondrial"/>
    <property type="match status" value="1"/>
</dbReference>
<dbReference type="Gene3D" id="3.30.70.240">
    <property type="match status" value="1"/>
</dbReference>
<dbReference type="Gene3D" id="3.30.70.2570">
    <property type="entry name" value="Elongation factor 4, C-terminal domain"/>
    <property type="match status" value="1"/>
</dbReference>
<dbReference type="Gene3D" id="3.30.70.870">
    <property type="entry name" value="Elongation Factor G (Translational Gtpase), domain 3"/>
    <property type="match status" value="1"/>
</dbReference>
<dbReference type="Gene3D" id="3.40.50.300">
    <property type="entry name" value="P-loop containing nucleotide triphosphate hydrolases"/>
    <property type="match status" value="1"/>
</dbReference>
<dbReference type="Gene3D" id="2.40.30.10">
    <property type="entry name" value="Translation factors"/>
    <property type="match status" value="1"/>
</dbReference>
<dbReference type="HAMAP" id="MF_00071">
    <property type="entry name" value="LepA"/>
    <property type="match status" value="1"/>
</dbReference>
<dbReference type="InterPro" id="IPR006297">
    <property type="entry name" value="EF-4"/>
</dbReference>
<dbReference type="InterPro" id="IPR041095">
    <property type="entry name" value="EFG_II"/>
</dbReference>
<dbReference type="InterPro" id="IPR035647">
    <property type="entry name" value="EFG_III/V"/>
</dbReference>
<dbReference type="InterPro" id="IPR000640">
    <property type="entry name" value="EFG_V-like"/>
</dbReference>
<dbReference type="InterPro" id="IPR004161">
    <property type="entry name" value="EFTu-like_2"/>
</dbReference>
<dbReference type="InterPro" id="IPR031157">
    <property type="entry name" value="G_TR_CS"/>
</dbReference>
<dbReference type="InterPro" id="IPR038363">
    <property type="entry name" value="LepA_C_sf"/>
</dbReference>
<dbReference type="InterPro" id="IPR013842">
    <property type="entry name" value="LepA_CTD"/>
</dbReference>
<dbReference type="InterPro" id="IPR035654">
    <property type="entry name" value="LepA_IV"/>
</dbReference>
<dbReference type="InterPro" id="IPR027417">
    <property type="entry name" value="P-loop_NTPase"/>
</dbReference>
<dbReference type="InterPro" id="IPR005225">
    <property type="entry name" value="Small_GTP-bd"/>
</dbReference>
<dbReference type="InterPro" id="IPR000795">
    <property type="entry name" value="T_Tr_GTP-bd_dom"/>
</dbReference>
<dbReference type="InterPro" id="IPR009000">
    <property type="entry name" value="Transl_B-barrel_sf"/>
</dbReference>
<dbReference type="NCBIfam" id="TIGR01393">
    <property type="entry name" value="lepA"/>
    <property type="match status" value="1"/>
</dbReference>
<dbReference type="NCBIfam" id="TIGR00231">
    <property type="entry name" value="small_GTP"/>
    <property type="match status" value="1"/>
</dbReference>
<dbReference type="PANTHER" id="PTHR43512:SF4">
    <property type="entry name" value="TRANSLATION FACTOR GUF1 HOMOLOG, CHLOROPLASTIC"/>
    <property type="match status" value="1"/>
</dbReference>
<dbReference type="PANTHER" id="PTHR43512">
    <property type="entry name" value="TRANSLATION FACTOR GUF1-RELATED"/>
    <property type="match status" value="1"/>
</dbReference>
<dbReference type="Pfam" id="PF00679">
    <property type="entry name" value="EFG_C"/>
    <property type="match status" value="1"/>
</dbReference>
<dbReference type="Pfam" id="PF14492">
    <property type="entry name" value="EFG_III"/>
    <property type="match status" value="1"/>
</dbReference>
<dbReference type="Pfam" id="PF00009">
    <property type="entry name" value="GTP_EFTU"/>
    <property type="match status" value="1"/>
</dbReference>
<dbReference type="Pfam" id="PF03144">
    <property type="entry name" value="GTP_EFTU_D2"/>
    <property type="match status" value="1"/>
</dbReference>
<dbReference type="Pfam" id="PF06421">
    <property type="entry name" value="LepA_C"/>
    <property type="match status" value="1"/>
</dbReference>
<dbReference type="PRINTS" id="PR00315">
    <property type="entry name" value="ELONGATNFCT"/>
</dbReference>
<dbReference type="SMART" id="SM00838">
    <property type="entry name" value="EFG_C"/>
    <property type="match status" value="1"/>
</dbReference>
<dbReference type="SUPFAM" id="SSF54980">
    <property type="entry name" value="EF-G C-terminal domain-like"/>
    <property type="match status" value="2"/>
</dbReference>
<dbReference type="SUPFAM" id="SSF52540">
    <property type="entry name" value="P-loop containing nucleoside triphosphate hydrolases"/>
    <property type="match status" value="1"/>
</dbReference>
<dbReference type="SUPFAM" id="SSF50447">
    <property type="entry name" value="Translation proteins"/>
    <property type="match status" value="1"/>
</dbReference>
<dbReference type="PROSITE" id="PS00301">
    <property type="entry name" value="G_TR_1"/>
    <property type="match status" value="1"/>
</dbReference>
<dbReference type="PROSITE" id="PS51722">
    <property type="entry name" value="G_TR_2"/>
    <property type="match status" value="1"/>
</dbReference>
<name>LEPA_STRPD</name>
<keyword id="KW-1003">Cell membrane</keyword>
<keyword id="KW-0342">GTP-binding</keyword>
<keyword id="KW-0378">Hydrolase</keyword>
<keyword id="KW-0472">Membrane</keyword>
<keyword id="KW-0547">Nucleotide-binding</keyword>
<keyword id="KW-0648">Protein biosynthesis</keyword>
<gene>
    <name evidence="1" type="primary">lepA</name>
    <name type="ordered locus">MGAS10270_Spy0892</name>
</gene>
<protein>
    <recommendedName>
        <fullName evidence="1">Elongation factor 4</fullName>
        <shortName evidence="1">EF-4</shortName>
        <ecNumber evidence="1">3.6.5.n1</ecNumber>
    </recommendedName>
    <alternativeName>
        <fullName evidence="1">Ribosomal back-translocase LepA</fullName>
    </alternativeName>
</protein>
<organism>
    <name type="scientific">Streptococcus pyogenes serotype M2 (strain MGAS10270)</name>
    <dbReference type="NCBI Taxonomy" id="370552"/>
    <lineage>
        <taxon>Bacteria</taxon>
        <taxon>Bacillati</taxon>
        <taxon>Bacillota</taxon>
        <taxon>Bacilli</taxon>
        <taxon>Lactobacillales</taxon>
        <taxon>Streptococcaceae</taxon>
        <taxon>Streptococcus</taxon>
    </lineage>
</organism>
<proteinExistence type="inferred from homology"/>
<sequence length="610" mass="68151">MNSQDLKKRQEKIRNFSIIAHIDHGKSTLADRILEKTETVSSREMQAQLLDSMDLERERGITIKLNAIELNYTAKDGETYIFHLIDTPGHVDFTYEVSRSLAACEGAILVVDAAQGIEAQTLANVYLALDNDLEILPVINKIDLPAADPERVRHEVEDVIGLDASEAVLASAKAGIGIEEILEQIVEKVPAPTGDVDAPLQALIFDSVYDAYRGVILQVRIVNGIVKSGDKIQMMSNGKTFDVTEVGIFTPKAVGRDFLATGDVGYVAASIKTVADTRVGDTVTLANNPAKEALHGYKQMNPMVFAGIYPIESNKYNDLREALEKLQLNDASLQFEPETSQALGFGFRCGFLGLLHMDVIQERLEREFNIDLIMTAPSVVYHVHTTDEDMIEVSNPSEFPDPTRVAFIEEPYVKAQIMVPQEFVGAVMELSQRKRGDFVTMDYIDDNRVNVIYQIPLAEIVFDFFDKLKSSTRGYASFDYDMSEYRRSQLVKMDILLNGDKVDALSFIVHKEFAYERGKIIVEKLKKIIPRQQFEVPIQAAIGQKIVARSDIKALRKNVLAKCYGGDVSRKRKLLEKQKAGKKRMKAIGSVEVPQEAFLSVLSMDDDAKK</sequence>
<accession>Q1JH37</accession>
<comment type="function">
    <text evidence="1">Required for accurate and efficient protein synthesis under certain stress conditions. May act as a fidelity factor of the translation reaction, by catalyzing a one-codon backward translocation of tRNAs on improperly translocated ribosomes. Back-translocation proceeds from a post-translocation (POST) complex to a pre-translocation (PRE) complex, thus giving elongation factor G a second chance to translocate the tRNAs correctly. Binds to ribosomes in a GTP-dependent manner.</text>
</comment>
<comment type="catalytic activity">
    <reaction evidence="1">
        <text>GTP + H2O = GDP + phosphate + H(+)</text>
        <dbReference type="Rhea" id="RHEA:19669"/>
        <dbReference type="ChEBI" id="CHEBI:15377"/>
        <dbReference type="ChEBI" id="CHEBI:15378"/>
        <dbReference type="ChEBI" id="CHEBI:37565"/>
        <dbReference type="ChEBI" id="CHEBI:43474"/>
        <dbReference type="ChEBI" id="CHEBI:58189"/>
        <dbReference type="EC" id="3.6.5.n1"/>
    </reaction>
</comment>
<comment type="subcellular location">
    <subcellularLocation>
        <location evidence="1">Cell membrane</location>
        <topology evidence="1">Peripheral membrane protein</topology>
        <orientation evidence="1">Cytoplasmic side</orientation>
    </subcellularLocation>
</comment>
<comment type="similarity">
    <text evidence="1">Belongs to the TRAFAC class translation factor GTPase superfamily. Classic translation factor GTPase family. LepA subfamily.</text>
</comment>